<name>ZN677_HUMAN</name>
<dbReference type="EMBL" id="BC050038">
    <property type="protein sequence ID" value="AAH50038.1"/>
    <property type="molecule type" value="mRNA"/>
</dbReference>
<dbReference type="CCDS" id="CCDS12861.1"/>
<dbReference type="RefSeq" id="NP_001304927.1">
    <property type="nucleotide sequence ID" value="NM_001317998.2"/>
</dbReference>
<dbReference type="RefSeq" id="NP_001372537.1">
    <property type="nucleotide sequence ID" value="NM_001385608.1"/>
</dbReference>
<dbReference type="RefSeq" id="NP_872415.1">
    <property type="nucleotide sequence ID" value="NM_182609.4"/>
</dbReference>
<dbReference type="RefSeq" id="XP_011525214.1">
    <property type="nucleotide sequence ID" value="XM_011526912.2"/>
</dbReference>
<dbReference type="SMR" id="Q86XU0"/>
<dbReference type="BioGRID" id="131210">
    <property type="interactions" value="27"/>
</dbReference>
<dbReference type="FunCoup" id="Q86XU0">
    <property type="interactions" value="78"/>
</dbReference>
<dbReference type="IntAct" id="Q86XU0">
    <property type="interactions" value="27"/>
</dbReference>
<dbReference type="STRING" id="9606.ENSP00000469391"/>
<dbReference type="iPTMnet" id="Q86XU0"/>
<dbReference type="PhosphoSitePlus" id="Q86XU0"/>
<dbReference type="BioMuta" id="ZNF677"/>
<dbReference type="DMDM" id="74759507"/>
<dbReference type="jPOST" id="Q86XU0"/>
<dbReference type="MassIVE" id="Q86XU0"/>
<dbReference type="PaxDb" id="9606-ENSP00000469391"/>
<dbReference type="PeptideAtlas" id="Q86XU0"/>
<dbReference type="ProteomicsDB" id="70334"/>
<dbReference type="Pumba" id="Q86XU0"/>
<dbReference type="Antibodypedia" id="19160">
    <property type="antibodies" value="75 antibodies from 18 providers"/>
</dbReference>
<dbReference type="DNASU" id="342926"/>
<dbReference type="Ensembl" id="ENST00000333952.8">
    <property type="protein sequence ID" value="ENSP00000334394.4"/>
    <property type="gene ID" value="ENSG00000197928.11"/>
</dbReference>
<dbReference type="Ensembl" id="ENST00000598513.6">
    <property type="protein sequence ID" value="ENSP00000469391.1"/>
    <property type="gene ID" value="ENSG00000197928.11"/>
</dbReference>
<dbReference type="GeneID" id="342926"/>
<dbReference type="KEGG" id="hsa:342926"/>
<dbReference type="MANE-Select" id="ENST00000598513.6">
    <property type="protein sequence ID" value="ENSP00000469391.1"/>
    <property type="RefSeq nucleotide sequence ID" value="NM_182609.4"/>
    <property type="RefSeq protein sequence ID" value="NP_872415.1"/>
</dbReference>
<dbReference type="UCSC" id="uc002qbg.2">
    <property type="organism name" value="human"/>
</dbReference>
<dbReference type="AGR" id="HGNC:28730"/>
<dbReference type="CTD" id="342926"/>
<dbReference type="DisGeNET" id="342926"/>
<dbReference type="GeneCards" id="ZNF677"/>
<dbReference type="HGNC" id="HGNC:28730">
    <property type="gene designation" value="ZNF677"/>
</dbReference>
<dbReference type="HPA" id="ENSG00000197928">
    <property type="expression patterns" value="Tissue enhanced (testis)"/>
</dbReference>
<dbReference type="neXtProt" id="NX_Q86XU0"/>
<dbReference type="OpenTargets" id="ENSG00000197928"/>
<dbReference type="PharmGKB" id="PA142670478"/>
<dbReference type="VEuPathDB" id="HostDB:ENSG00000197928"/>
<dbReference type="eggNOG" id="KOG1721">
    <property type="taxonomic scope" value="Eukaryota"/>
</dbReference>
<dbReference type="GeneTree" id="ENSGT00940000160770"/>
<dbReference type="HOGENOM" id="CLU_002678_0_2_1"/>
<dbReference type="InParanoid" id="Q86XU0"/>
<dbReference type="OMA" id="WENMSKF"/>
<dbReference type="OrthoDB" id="6591996at2759"/>
<dbReference type="PAN-GO" id="Q86XU0">
    <property type="GO annotations" value="4 GO annotations based on evolutionary models"/>
</dbReference>
<dbReference type="PhylomeDB" id="Q86XU0"/>
<dbReference type="TreeFam" id="TF341892"/>
<dbReference type="PathwayCommons" id="Q86XU0"/>
<dbReference type="Reactome" id="R-HSA-212436">
    <property type="pathway name" value="Generic Transcription Pathway"/>
</dbReference>
<dbReference type="SignaLink" id="Q86XU0"/>
<dbReference type="BioGRID-ORCS" id="342926">
    <property type="hits" value="10 hits in 1173 CRISPR screens"/>
</dbReference>
<dbReference type="ChiTaRS" id="ZNF677">
    <property type="organism name" value="human"/>
</dbReference>
<dbReference type="GenomeRNAi" id="342926"/>
<dbReference type="Pharos" id="Q86XU0">
    <property type="development level" value="Tbio"/>
</dbReference>
<dbReference type="PRO" id="PR:Q86XU0"/>
<dbReference type="Proteomes" id="UP000005640">
    <property type="component" value="Chromosome 19"/>
</dbReference>
<dbReference type="RNAct" id="Q86XU0">
    <property type="molecule type" value="protein"/>
</dbReference>
<dbReference type="Bgee" id="ENSG00000197928">
    <property type="expression patterns" value="Expressed in secondary oocyte and 176 other cell types or tissues"/>
</dbReference>
<dbReference type="ExpressionAtlas" id="Q86XU0">
    <property type="expression patterns" value="baseline and differential"/>
</dbReference>
<dbReference type="GO" id="GO:0005634">
    <property type="term" value="C:nucleus"/>
    <property type="evidence" value="ECO:0000318"/>
    <property type="project" value="GO_Central"/>
</dbReference>
<dbReference type="GO" id="GO:0000981">
    <property type="term" value="F:DNA-binding transcription factor activity, RNA polymerase II-specific"/>
    <property type="evidence" value="ECO:0000318"/>
    <property type="project" value="GO_Central"/>
</dbReference>
<dbReference type="GO" id="GO:0000978">
    <property type="term" value="F:RNA polymerase II cis-regulatory region sequence-specific DNA binding"/>
    <property type="evidence" value="ECO:0000318"/>
    <property type="project" value="GO_Central"/>
</dbReference>
<dbReference type="GO" id="GO:0008270">
    <property type="term" value="F:zinc ion binding"/>
    <property type="evidence" value="ECO:0007669"/>
    <property type="project" value="UniProtKB-KW"/>
</dbReference>
<dbReference type="GO" id="GO:0006357">
    <property type="term" value="P:regulation of transcription by RNA polymerase II"/>
    <property type="evidence" value="ECO:0000318"/>
    <property type="project" value="GO_Central"/>
</dbReference>
<dbReference type="CDD" id="cd07765">
    <property type="entry name" value="KRAB_A-box"/>
    <property type="match status" value="1"/>
</dbReference>
<dbReference type="FunFam" id="3.30.160.60:FF:004137">
    <property type="match status" value="1"/>
</dbReference>
<dbReference type="FunFam" id="3.30.160.60:FF:000853">
    <property type="entry name" value="zinc finger protein 205 isoform X1"/>
    <property type="match status" value="1"/>
</dbReference>
<dbReference type="FunFam" id="3.30.160.60:FF:002402">
    <property type="entry name" value="Zinc finger protein 347"/>
    <property type="match status" value="1"/>
</dbReference>
<dbReference type="FunFam" id="3.30.160.60:FF:000016">
    <property type="entry name" value="zinc finger protein 37 homolog"/>
    <property type="match status" value="1"/>
</dbReference>
<dbReference type="FunFam" id="3.30.160.60:FF:002090">
    <property type="entry name" value="Zinc finger protein 473"/>
    <property type="match status" value="1"/>
</dbReference>
<dbReference type="FunFam" id="3.30.160.60:FF:002355">
    <property type="entry name" value="Zinc finger protein 623"/>
    <property type="match status" value="1"/>
</dbReference>
<dbReference type="FunFam" id="3.30.160.60:FF:001105">
    <property type="entry name" value="Zinc finger protein 677"/>
    <property type="match status" value="2"/>
</dbReference>
<dbReference type="FunFam" id="3.30.160.60:FF:001700">
    <property type="entry name" value="Zinc finger protein 677"/>
    <property type="match status" value="1"/>
</dbReference>
<dbReference type="FunFam" id="3.30.160.60:FF:001904">
    <property type="entry name" value="Zinc finger protein 677"/>
    <property type="match status" value="1"/>
</dbReference>
<dbReference type="FunFam" id="3.30.160.60:FF:000933">
    <property type="entry name" value="zinc finger protein 771"/>
    <property type="match status" value="1"/>
</dbReference>
<dbReference type="Gene3D" id="6.10.140.140">
    <property type="match status" value="1"/>
</dbReference>
<dbReference type="Gene3D" id="3.30.160.60">
    <property type="entry name" value="Classic Zinc Finger"/>
    <property type="match status" value="10"/>
</dbReference>
<dbReference type="InterPro" id="IPR001909">
    <property type="entry name" value="KRAB"/>
</dbReference>
<dbReference type="InterPro" id="IPR036051">
    <property type="entry name" value="KRAB_dom_sf"/>
</dbReference>
<dbReference type="InterPro" id="IPR050826">
    <property type="entry name" value="Krueppel_C2H2_ZnFinger"/>
</dbReference>
<dbReference type="InterPro" id="IPR036236">
    <property type="entry name" value="Znf_C2H2_sf"/>
</dbReference>
<dbReference type="InterPro" id="IPR013087">
    <property type="entry name" value="Znf_C2H2_type"/>
</dbReference>
<dbReference type="PANTHER" id="PTHR24377">
    <property type="entry name" value="IP01015P-RELATED"/>
    <property type="match status" value="1"/>
</dbReference>
<dbReference type="Pfam" id="PF01352">
    <property type="entry name" value="KRAB"/>
    <property type="match status" value="1"/>
</dbReference>
<dbReference type="Pfam" id="PF00096">
    <property type="entry name" value="zf-C2H2"/>
    <property type="match status" value="10"/>
</dbReference>
<dbReference type="SMART" id="SM00349">
    <property type="entry name" value="KRAB"/>
    <property type="match status" value="1"/>
</dbReference>
<dbReference type="SMART" id="SM00355">
    <property type="entry name" value="ZnF_C2H2"/>
    <property type="match status" value="10"/>
</dbReference>
<dbReference type="SUPFAM" id="SSF57667">
    <property type="entry name" value="beta-beta-alpha zinc fingers"/>
    <property type="match status" value="6"/>
</dbReference>
<dbReference type="SUPFAM" id="SSF109640">
    <property type="entry name" value="KRAB domain (Kruppel-associated box)"/>
    <property type="match status" value="1"/>
</dbReference>
<dbReference type="PROSITE" id="PS50805">
    <property type="entry name" value="KRAB"/>
    <property type="match status" value="1"/>
</dbReference>
<dbReference type="PROSITE" id="PS00028">
    <property type="entry name" value="ZINC_FINGER_C2H2_1"/>
    <property type="match status" value="10"/>
</dbReference>
<dbReference type="PROSITE" id="PS50157">
    <property type="entry name" value="ZINC_FINGER_C2H2_2"/>
    <property type="match status" value="10"/>
</dbReference>
<comment type="function">
    <text>May be involved in transcriptional regulation.</text>
</comment>
<comment type="subcellular location">
    <subcellularLocation>
        <location evidence="3">Nucleus</location>
    </subcellularLocation>
</comment>
<comment type="similarity">
    <text evidence="3">Belongs to the krueppel C2H2-type zinc-finger protein family.</text>
</comment>
<sequence length="584" mass="67996">MALSQGLFTFKDVAIEFSQEEWECLDPAQRALYRDVMLENYRNLLSLDEDNIPPEDDISVGFTSKGLSPKENNKEELYHLVILERKESHGINNFDLKEVWENMPKFDSLWDYDVKNYKGMPLTCNKNLTHRKDQQHNKSSIHFSLKQSVSIRDSAHQYFIHDKPFIRNLLKLKNNIRYAGNKYVKCFENKIGLSLQAQLAELQRFQTGEKMYECNPVEKSINSSSVSPLPPCVKNICNKYRKILKYPLLHTQYGRTHIREKSYKCNDCGKAFSKSSNLTNHQRIHSGQRPYKCNECGKAFNQCSNLTRHQRVHTGEKPYQCNICGKVCSQNSNLASHQRMHTGEKPYKCNECGKAFIQRSHLWGHERIHTGEKPYKCNECDKAFAERSSLTQHKRIHTGEKPYICNECGKAFKQCSHLTRHQNIHPGEKPHKCNVCGRAFIQSSSLVEHQRIHTGEKPYKCNKCDKAFIKRSHLWGHQRTHTGEKPYKCTECGKAFTERSNLTQHKKIHTGEKPYKCTECGKAFTQFANLTRHQKIHIEKKHCKHNIHGNALFQSSNLGDHQKSYNREKHIKYNETKIKYSSCT</sequence>
<evidence type="ECO:0000255" key="1">
    <source>
        <dbReference type="PROSITE-ProRule" id="PRU00042"/>
    </source>
</evidence>
<evidence type="ECO:0000255" key="2">
    <source>
        <dbReference type="PROSITE-ProRule" id="PRU00119"/>
    </source>
</evidence>
<evidence type="ECO:0000305" key="3"/>
<reference key="1">
    <citation type="journal article" date="2004" name="Genome Res.">
        <title>The status, quality, and expansion of the NIH full-length cDNA project: the Mammalian Gene Collection (MGC).</title>
        <authorList>
            <consortium name="The MGC Project Team"/>
        </authorList>
    </citation>
    <scope>NUCLEOTIDE SEQUENCE [LARGE SCALE MRNA]</scope>
    <source>
        <tissue>Testis</tissue>
    </source>
</reference>
<proteinExistence type="evidence at transcript level"/>
<organism>
    <name type="scientific">Homo sapiens</name>
    <name type="common">Human</name>
    <dbReference type="NCBI Taxonomy" id="9606"/>
    <lineage>
        <taxon>Eukaryota</taxon>
        <taxon>Metazoa</taxon>
        <taxon>Chordata</taxon>
        <taxon>Craniata</taxon>
        <taxon>Vertebrata</taxon>
        <taxon>Euteleostomi</taxon>
        <taxon>Mammalia</taxon>
        <taxon>Eutheria</taxon>
        <taxon>Euarchontoglires</taxon>
        <taxon>Primates</taxon>
        <taxon>Haplorrhini</taxon>
        <taxon>Catarrhini</taxon>
        <taxon>Hominidae</taxon>
        <taxon>Homo</taxon>
    </lineage>
</organism>
<keyword id="KW-0238">DNA-binding</keyword>
<keyword id="KW-0479">Metal-binding</keyword>
<keyword id="KW-0539">Nucleus</keyword>
<keyword id="KW-1185">Reference proteome</keyword>
<keyword id="KW-0677">Repeat</keyword>
<keyword id="KW-0804">Transcription</keyword>
<keyword id="KW-0805">Transcription regulation</keyword>
<keyword id="KW-0862">Zinc</keyword>
<keyword id="KW-0863">Zinc-finger</keyword>
<feature type="chain" id="PRO_0000233997" description="Zinc finger protein 677">
    <location>
        <begin position="1"/>
        <end position="584"/>
    </location>
</feature>
<feature type="domain" description="KRAB" evidence="2">
    <location>
        <begin position="8"/>
        <end position="90"/>
    </location>
</feature>
<feature type="zinc finger region" description="C2H2-type 1" evidence="1">
    <location>
        <begin position="263"/>
        <end position="285"/>
    </location>
</feature>
<feature type="zinc finger region" description="C2H2-type 2" evidence="1">
    <location>
        <begin position="291"/>
        <end position="313"/>
    </location>
</feature>
<feature type="zinc finger region" description="C2H2-type 3" evidence="1">
    <location>
        <begin position="319"/>
        <end position="341"/>
    </location>
</feature>
<feature type="zinc finger region" description="C2H2-type 4" evidence="1">
    <location>
        <begin position="347"/>
        <end position="369"/>
    </location>
</feature>
<feature type="zinc finger region" description="C2H2-type 5" evidence="1">
    <location>
        <begin position="375"/>
        <end position="397"/>
    </location>
</feature>
<feature type="zinc finger region" description="C2H2-type 6" evidence="1">
    <location>
        <begin position="403"/>
        <end position="425"/>
    </location>
</feature>
<feature type="zinc finger region" description="C2H2-type 7" evidence="1">
    <location>
        <begin position="431"/>
        <end position="453"/>
    </location>
</feature>
<feature type="zinc finger region" description="C2H2-type 8" evidence="1">
    <location>
        <begin position="459"/>
        <end position="481"/>
    </location>
</feature>
<feature type="zinc finger region" description="C2H2-type 9" evidence="1">
    <location>
        <begin position="487"/>
        <end position="509"/>
    </location>
</feature>
<feature type="zinc finger region" description="C2H2-type 10" evidence="1">
    <location>
        <begin position="515"/>
        <end position="537"/>
    </location>
</feature>
<feature type="sequence variant" id="VAR_052889" description="In dbSNP:rs11881131.">
    <original>D</original>
    <variation>N</variation>
    <location>
        <position position="56"/>
    </location>
</feature>
<feature type="sequence variant" id="VAR_052890" description="In dbSNP:rs10425706.">
    <original>G</original>
    <variation>E</variation>
    <location>
        <position position="254"/>
    </location>
</feature>
<gene>
    <name type="primary">ZNF677</name>
</gene>
<accession>Q86XU0</accession>
<protein>
    <recommendedName>
        <fullName>Zinc finger protein 677</fullName>
    </recommendedName>
</protein>